<protein>
    <recommendedName>
        <fullName evidence="1">DNA primase large subunit PriL</fullName>
    </recommendedName>
</protein>
<accession>Q58112</accession>
<comment type="function">
    <text evidence="1">Regulatory subunit of DNA primase, an RNA polymerase that catalyzes the synthesis of short RNA molecules used as primers for DNA polymerase during DNA replication. Stabilizes and modulates the activity of the small subunit, increasing the rate of DNA synthesis, and conferring RNA synthesis capability. The DNA polymerase activity may enable DNA primase to also catalyze primer extension after primer synthesis. May also play a role in DNA repair.</text>
</comment>
<comment type="cofactor">
    <cofactor evidence="1">
        <name>[4Fe-4S] cluster</name>
        <dbReference type="ChEBI" id="CHEBI:49883"/>
    </cofactor>
    <text evidence="1">Binds 1 [4Fe-4S] cluster.</text>
</comment>
<comment type="subunit">
    <text evidence="1">Heterodimer of a small subunit (PriS) and a large subunit (PriL).</text>
</comment>
<comment type="similarity">
    <text evidence="1">Belongs to the eukaryotic-type primase large subunit family.</text>
</comment>
<reference key="1">
    <citation type="journal article" date="1996" name="Science">
        <title>Complete genome sequence of the methanogenic archaeon, Methanococcus jannaschii.</title>
        <authorList>
            <person name="Bult C.J."/>
            <person name="White O."/>
            <person name="Olsen G.J."/>
            <person name="Zhou L."/>
            <person name="Fleischmann R.D."/>
            <person name="Sutton G.G."/>
            <person name="Blake J.A."/>
            <person name="FitzGerald L.M."/>
            <person name="Clayton R.A."/>
            <person name="Gocayne J.D."/>
            <person name="Kerlavage A.R."/>
            <person name="Dougherty B.A."/>
            <person name="Tomb J.-F."/>
            <person name="Adams M.D."/>
            <person name="Reich C.I."/>
            <person name="Overbeek R."/>
            <person name="Kirkness E.F."/>
            <person name="Weinstock K.G."/>
            <person name="Merrick J.M."/>
            <person name="Glodek A."/>
            <person name="Scott J.L."/>
            <person name="Geoghagen N.S.M."/>
            <person name="Weidman J.F."/>
            <person name="Fuhrmann J.L."/>
            <person name="Nguyen D."/>
            <person name="Utterback T.R."/>
            <person name="Kelley J.M."/>
            <person name="Peterson J.D."/>
            <person name="Sadow P.W."/>
            <person name="Hanna M.C."/>
            <person name="Cotton M.D."/>
            <person name="Roberts K.M."/>
            <person name="Hurst M.A."/>
            <person name="Kaine B.P."/>
            <person name="Borodovsky M."/>
            <person name="Klenk H.-P."/>
            <person name="Fraser C.M."/>
            <person name="Smith H.O."/>
            <person name="Woese C.R."/>
            <person name="Venter J.C."/>
        </authorList>
    </citation>
    <scope>NUCLEOTIDE SEQUENCE [LARGE SCALE GENOMIC DNA]</scope>
    <source>
        <strain>ATCC 43067 / DSM 2661 / JAL-1 / JCM 10045 / NBRC 100440</strain>
    </source>
</reference>
<organism>
    <name type="scientific">Methanocaldococcus jannaschii (strain ATCC 43067 / DSM 2661 / JAL-1 / JCM 10045 / NBRC 100440)</name>
    <name type="common">Methanococcus jannaschii</name>
    <dbReference type="NCBI Taxonomy" id="243232"/>
    <lineage>
        <taxon>Archaea</taxon>
        <taxon>Methanobacteriati</taxon>
        <taxon>Methanobacteriota</taxon>
        <taxon>Methanomada group</taxon>
        <taxon>Methanococci</taxon>
        <taxon>Methanococcales</taxon>
        <taxon>Methanocaldococcaceae</taxon>
        <taxon>Methanocaldococcus</taxon>
    </lineage>
</organism>
<feature type="chain" id="PRO_0000106995" description="DNA primase large subunit PriL">
    <location>
        <begin position="1"/>
        <end position="414"/>
    </location>
</feature>
<feature type="binding site" evidence="1">
    <location>
        <position position="251"/>
    </location>
    <ligand>
        <name>[4Fe-4S] cluster</name>
        <dbReference type="ChEBI" id="CHEBI:49883"/>
    </ligand>
</feature>
<feature type="binding site" evidence="1">
    <location>
        <position position="352"/>
    </location>
    <ligand>
        <name>[4Fe-4S] cluster</name>
        <dbReference type="ChEBI" id="CHEBI:49883"/>
    </ligand>
</feature>
<feature type="binding site" evidence="1">
    <location>
        <position position="370"/>
    </location>
    <ligand>
        <name>[4Fe-4S] cluster</name>
        <dbReference type="ChEBI" id="CHEBI:49883"/>
    </ligand>
</feature>
<feature type="binding site" evidence="1">
    <location>
        <position position="376"/>
    </location>
    <ligand>
        <name>[4Fe-4S] cluster</name>
        <dbReference type="ChEBI" id="CHEBI:49883"/>
    </ligand>
</feature>
<evidence type="ECO:0000255" key="1">
    <source>
        <dbReference type="HAMAP-Rule" id="MF_00701"/>
    </source>
</evidence>
<sequence>MIIMLSEYLEEFKEYLERFKNIDINFSDVLKMSKKFIIWRLKQIFGDSSTIFTNISSEITIFDKIFQMIDYDIDGEVEKRLPKDESRFMIGVRREKEIEIKKEIITNLLDFLLIILLSHTPYFNAFVRKYAEIKKIKVIKKLPNKISVWEFIKIASRSRINDLHLERLDLENGFVDITKIKEIFAKEIIRVELMKLGENIKKRKLPDDSVVKELLNEISDYLKDKVKYEQISGIKALNYKGNIPLEWHPPCIRGILNDILSGGSPSHYARRSFVVYWFCAKFNPNLRPLDKNGNLVNVSATDIASEEEIERFIDELIEMLFKNVEDFDEKKTRYYIMHNIGYKVGHGRLTHCEYCKNWQDDGGKGLSYYCKPDELCKKKFIIHPLDYLCYNINKHLKKERFKKIKKEDKNGDNK</sequence>
<gene>
    <name evidence="1" type="primary">priL</name>
    <name type="ordered locus">MJ0701</name>
</gene>
<dbReference type="EMBL" id="L77117">
    <property type="protein sequence ID" value="AAB98698.1"/>
    <property type="molecule type" value="Genomic_DNA"/>
</dbReference>
<dbReference type="PIR" id="E64387">
    <property type="entry name" value="E64387"/>
</dbReference>
<dbReference type="RefSeq" id="WP_010870206.1">
    <property type="nucleotide sequence ID" value="NC_000909.1"/>
</dbReference>
<dbReference type="FunCoup" id="Q58112">
    <property type="interactions" value="16"/>
</dbReference>
<dbReference type="STRING" id="243232.MJ_0701"/>
<dbReference type="PaxDb" id="243232-MJ_0701"/>
<dbReference type="EnsemblBacteria" id="AAB98698">
    <property type="protein sequence ID" value="AAB98698"/>
    <property type="gene ID" value="MJ_0701"/>
</dbReference>
<dbReference type="GeneID" id="1451568"/>
<dbReference type="KEGG" id="mja:MJ_0701"/>
<dbReference type="eggNOG" id="arCOG03013">
    <property type="taxonomic scope" value="Archaea"/>
</dbReference>
<dbReference type="HOGENOM" id="CLU_759942_0_0_2"/>
<dbReference type="InParanoid" id="Q58112"/>
<dbReference type="OrthoDB" id="46081at2157"/>
<dbReference type="PhylomeDB" id="Q58112"/>
<dbReference type="Proteomes" id="UP000000805">
    <property type="component" value="Chromosome"/>
</dbReference>
<dbReference type="GO" id="GO:1990077">
    <property type="term" value="C:primosome complex"/>
    <property type="evidence" value="ECO:0007669"/>
    <property type="project" value="UniProtKB-KW"/>
</dbReference>
<dbReference type="GO" id="GO:0051539">
    <property type="term" value="F:4 iron, 4 sulfur cluster binding"/>
    <property type="evidence" value="ECO:0007669"/>
    <property type="project" value="UniProtKB-UniRule"/>
</dbReference>
<dbReference type="GO" id="GO:0003899">
    <property type="term" value="F:DNA-directed RNA polymerase activity"/>
    <property type="evidence" value="ECO:0007669"/>
    <property type="project" value="InterPro"/>
</dbReference>
<dbReference type="GO" id="GO:0046872">
    <property type="term" value="F:metal ion binding"/>
    <property type="evidence" value="ECO:0007669"/>
    <property type="project" value="UniProtKB-KW"/>
</dbReference>
<dbReference type="GO" id="GO:0006269">
    <property type="term" value="P:DNA replication, synthesis of primer"/>
    <property type="evidence" value="ECO:0007669"/>
    <property type="project" value="UniProtKB-UniRule"/>
</dbReference>
<dbReference type="HAMAP" id="MF_00701">
    <property type="entry name" value="DNA_primase_lrg_arc"/>
    <property type="match status" value="1"/>
</dbReference>
<dbReference type="InterPro" id="IPR007238">
    <property type="entry name" value="DNA_primase_lsu_euk/arc"/>
</dbReference>
<dbReference type="InterPro" id="IPR023642">
    <property type="entry name" value="DNA_primase_lsu_PriL"/>
</dbReference>
<dbReference type="Pfam" id="PF04104">
    <property type="entry name" value="DNA_primase_lrg"/>
    <property type="match status" value="1"/>
</dbReference>
<keyword id="KW-0004">4Fe-4S</keyword>
<keyword id="KW-0235">DNA replication</keyword>
<keyword id="KW-0408">Iron</keyword>
<keyword id="KW-0411">Iron-sulfur</keyword>
<keyword id="KW-0479">Metal-binding</keyword>
<keyword id="KW-0639">Primosome</keyword>
<keyword id="KW-1185">Reference proteome</keyword>
<proteinExistence type="inferred from homology"/>
<name>PRIL_METJA</name>